<feature type="signal peptide" evidence="2">
    <location>
        <begin position="1"/>
        <end position="22"/>
    </location>
</feature>
<feature type="propeptide" id="PRO_0000316913" evidence="1">
    <location>
        <begin position="23"/>
        <end position="50"/>
    </location>
</feature>
<feature type="peptide" id="PRO_0000316914" description="Conotoxin Vi5.1a">
    <location>
        <begin position="51"/>
        <end position="62"/>
    </location>
</feature>
<feature type="modified residue" description="Proline amide" evidence="1">
    <location>
        <position position="62"/>
    </location>
</feature>
<reference key="1">
    <citation type="journal article" date="2007" name="Peptides">
        <title>Identification of six novel T-1 conotoxins from Conus pulicarius by molecular cloning.</title>
        <authorList>
            <person name="Peng C."/>
            <person name="Wu X."/>
            <person name="Han Y."/>
            <person name="Yuan D."/>
            <person name="Chi C."/>
            <person name="Wang C."/>
        </authorList>
    </citation>
    <scope>NUCLEOTIDE SEQUENCE [MRNA]</scope>
    <source>
        <tissue>Venom duct</tissue>
    </source>
</reference>
<proteinExistence type="evidence at transcript level"/>
<name>CT51A_CONVR</name>
<organism>
    <name type="scientific">Conus virgo</name>
    <name type="common">Virgin cone</name>
    <dbReference type="NCBI Taxonomy" id="89427"/>
    <lineage>
        <taxon>Eukaryota</taxon>
        <taxon>Metazoa</taxon>
        <taxon>Spiralia</taxon>
        <taxon>Lophotrochozoa</taxon>
        <taxon>Mollusca</taxon>
        <taxon>Gastropoda</taxon>
        <taxon>Caenogastropoda</taxon>
        <taxon>Neogastropoda</taxon>
        <taxon>Conoidea</taxon>
        <taxon>Conidae</taxon>
        <taxon>Conus</taxon>
        <taxon>Virgiconus</taxon>
    </lineage>
</organism>
<protein>
    <recommendedName>
        <fullName evidence="3">Conotoxin Vi5.1a</fullName>
    </recommendedName>
</protein>
<dbReference type="EMBL" id="EU090175">
    <property type="protein sequence ID" value="ABW77583.1"/>
    <property type="molecule type" value="mRNA"/>
</dbReference>
<dbReference type="ConoServer" id="2811">
    <property type="toxin name" value="Vi5.1a precursor"/>
</dbReference>
<dbReference type="GO" id="GO:0005576">
    <property type="term" value="C:extracellular region"/>
    <property type="evidence" value="ECO:0007669"/>
    <property type="project" value="UniProtKB-SubCell"/>
</dbReference>
<dbReference type="GO" id="GO:0090729">
    <property type="term" value="F:toxin activity"/>
    <property type="evidence" value="ECO:0007669"/>
    <property type="project" value="UniProtKB-KW"/>
</dbReference>
<dbReference type="InterPro" id="IPR031565">
    <property type="entry name" value="T-conotoxin"/>
</dbReference>
<dbReference type="Pfam" id="PF16981">
    <property type="entry name" value="Chi-conotoxin"/>
    <property type="match status" value="1"/>
</dbReference>
<sequence>MRCVPVFIILLLLIPSAPSADAQPKTKDDVPLASYHDNAERTLQRLWNQRHCCPIDLPCCPPG</sequence>
<keyword id="KW-0027">Amidation</keyword>
<keyword id="KW-1015">Disulfide bond</keyword>
<keyword id="KW-0964">Secreted</keyword>
<keyword id="KW-0732">Signal</keyword>
<keyword id="KW-0800">Toxin</keyword>
<accession>P0C669</accession>
<accession>B4XT47</accession>
<comment type="subcellular location">
    <subcellularLocation>
        <location evidence="1">Secreted</location>
    </subcellularLocation>
</comment>
<comment type="tissue specificity">
    <text>Expressed by the venom duct.</text>
</comment>
<comment type="domain">
    <text>The cysteine framework is V (CC-CC).</text>
</comment>
<comment type="PTM">
    <text evidence="4">Contains 2 disulfide bonds that can be either 'C1-C3, C2-C4' or 'C1-C4, C2-C3', since these disulfide connectivities have been observed for conotoxins with cysteine framework V (for examples, see AC P0DQQ7 and AC P81755).</text>
</comment>
<comment type="similarity">
    <text evidence="4">Belongs to the conotoxin T superfamily.</text>
</comment>
<evidence type="ECO:0000250" key="1"/>
<evidence type="ECO:0000255" key="2"/>
<evidence type="ECO:0000303" key="3">
    <source>
    </source>
</evidence>
<evidence type="ECO:0000305" key="4"/>